<proteinExistence type="evidence at transcript level"/>
<evidence type="ECO:0000255" key="1">
    <source>
        <dbReference type="PROSITE-ProRule" id="PRU10023"/>
    </source>
</evidence>
<evidence type="ECO:0000305" key="2"/>
<accession>O04220</accession>
<name>CHSY_CHRAE</name>
<organism>
    <name type="scientific">Chrysosplenium americanum</name>
    <name type="common">American golden saxifrage</name>
    <dbReference type="NCBI Taxonomy" id="36749"/>
    <lineage>
        <taxon>Eukaryota</taxon>
        <taxon>Viridiplantae</taxon>
        <taxon>Streptophyta</taxon>
        <taxon>Embryophyta</taxon>
        <taxon>Tracheophyta</taxon>
        <taxon>Spermatophyta</taxon>
        <taxon>Magnoliopsida</taxon>
        <taxon>eudicotyledons</taxon>
        <taxon>Gunneridae</taxon>
        <taxon>Pentapetalae</taxon>
        <taxon>Saxifragales</taxon>
        <taxon>Saxifragaceae</taxon>
        <taxon>Chrysosplenieae</taxon>
        <taxon>Chrysosplenium</taxon>
    </lineage>
</organism>
<comment type="function">
    <text>The primary product of this enzyme is 4,2',4',6'-tetrahydroxychalcone (also termed naringenin-chalcone or chalcone) which can under specific conditions spontaneously isomerize into naringenin.</text>
</comment>
<comment type="catalytic activity">
    <reaction evidence="1">
        <text>(E)-4-coumaroyl-CoA + 3 malonyl-CoA + 3 H(+) = 2',4,4',6'-tetrahydroxychalcone + 3 CO2 + 4 CoA</text>
        <dbReference type="Rhea" id="RHEA:11128"/>
        <dbReference type="ChEBI" id="CHEBI:15378"/>
        <dbReference type="ChEBI" id="CHEBI:15413"/>
        <dbReference type="ChEBI" id="CHEBI:16526"/>
        <dbReference type="ChEBI" id="CHEBI:57287"/>
        <dbReference type="ChEBI" id="CHEBI:57384"/>
        <dbReference type="ChEBI" id="CHEBI:85008"/>
        <dbReference type="EC" id="2.3.1.74"/>
    </reaction>
</comment>
<comment type="pathway">
    <text>Secondary metabolite biosynthesis; flavonoid biosynthesis.</text>
</comment>
<comment type="similarity">
    <text evidence="2">Belongs to the thiolase-like superfamily. Chalcone/stilbene synthases family.</text>
</comment>
<feature type="chain" id="PRO_0000215966" description="Chalcone synthase">
    <location>
        <begin position="1"/>
        <end position="396"/>
    </location>
</feature>
<feature type="active site" evidence="1">
    <location>
        <position position="167"/>
    </location>
</feature>
<dbReference type="EC" id="2.3.1.74"/>
<dbReference type="EMBL" id="U96661">
    <property type="protein sequence ID" value="AAB54075.1"/>
    <property type="molecule type" value="mRNA"/>
</dbReference>
<dbReference type="SMR" id="O04220"/>
<dbReference type="UniPathway" id="UPA00154"/>
<dbReference type="GO" id="GO:0016210">
    <property type="term" value="F:naringenin-chalcone synthase activity"/>
    <property type="evidence" value="ECO:0007669"/>
    <property type="project" value="UniProtKB-EC"/>
</dbReference>
<dbReference type="GO" id="GO:0009813">
    <property type="term" value="P:flavonoid biosynthetic process"/>
    <property type="evidence" value="ECO:0007669"/>
    <property type="project" value="UniProtKB-UniPathway"/>
</dbReference>
<dbReference type="GO" id="GO:0030639">
    <property type="term" value="P:polyketide biosynthetic process"/>
    <property type="evidence" value="ECO:0007669"/>
    <property type="project" value="TreeGrafter"/>
</dbReference>
<dbReference type="CDD" id="cd00831">
    <property type="entry name" value="CHS_like"/>
    <property type="match status" value="1"/>
</dbReference>
<dbReference type="FunFam" id="3.40.47.10:FF:000014">
    <property type="entry name" value="Chalcone synthase 1"/>
    <property type="match status" value="1"/>
</dbReference>
<dbReference type="FunFam" id="3.40.47.10:FF:000025">
    <property type="entry name" value="Chalcone synthase 2"/>
    <property type="match status" value="1"/>
</dbReference>
<dbReference type="Gene3D" id="3.40.47.10">
    <property type="match status" value="2"/>
</dbReference>
<dbReference type="InterPro" id="IPR012328">
    <property type="entry name" value="Chalcone/stilbene_synt_C"/>
</dbReference>
<dbReference type="InterPro" id="IPR001099">
    <property type="entry name" value="Chalcone/stilbene_synt_N"/>
</dbReference>
<dbReference type="InterPro" id="IPR018088">
    <property type="entry name" value="Chalcone/stilbene_synthase_AS"/>
</dbReference>
<dbReference type="InterPro" id="IPR011141">
    <property type="entry name" value="Polyketide_synthase_type-III"/>
</dbReference>
<dbReference type="InterPro" id="IPR016039">
    <property type="entry name" value="Thiolase-like"/>
</dbReference>
<dbReference type="PANTHER" id="PTHR11877:SF14">
    <property type="entry name" value="CHALCONE SYNTHASE"/>
    <property type="match status" value="1"/>
</dbReference>
<dbReference type="PANTHER" id="PTHR11877">
    <property type="entry name" value="HYDROXYMETHYLGLUTARYL-COA SYNTHASE"/>
    <property type="match status" value="1"/>
</dbReference>
<dbReference type="Pfam" id="PF02797">
    <property type="entry name" value="Chal_sti_synt_C"/>
    <property type="match status" value="1"/>
</dbReference>
<dbReference type="Pfam" id="PF00195">
    <property type="entry name" value="Chal_sti_synt_N"/>
    <property type="match status" value="1"/>
</dbReference>
<dbReference type="PIRSF" id="PIRSF000451">
    <property type="entry name" value="PKS_III"/>
    <property type="match status" value="1"/>
</dbReference>
<dbReference type="SUPFAM" id="SSF53901">
    <property type="entry name" value="Thiolase-like"/>
    <property type="match status" value="2"/>
</dbReference>
<dbReference type="PROSITE" id="PS00441">
    <property type="entry name" value="CHALCONE_SYNTH"/>
    <property type="match status" value="1"/>
</dbReference>
<keyword id="KW-0012">Acyltransferase</keyword>
<keyword id="KW-0284">Flavonoid biosynthesis</keyword>
<keyword id="KW-0808">Transferase</keyword>
<reference key="1">
    <citation type="submission" date="1997-04" db="EMBL/GenBank/DDBJ databases">
        <title>A cDNA encoding chalcone synthase from Chrysosplenium americanum.</title>
        <authorList>
            <person name="Gauthier A."/>
            <person name="Gulick P.J."/>
            <person name="Ibrahim R.K."/>
        </authorList>
    </citation>
    <scope>NUCLEOTIDE SEQUENCE [MRNA]</scope>
</reference>
<gene>
    <name type="primary">CHS</name>
</gene>
<sequence>MSSAALMEEIRNAQRAEGPATILAIGTATPANCVIQADYPDFYFRITNSEHKTELKEKFQRMCDKSMIKKRYMHLTEDLLKENPKMCEYMAPSLDARQDMVVVEIRKLGKEAAVKAIKEWGQPKSKITHLVFCTTSGVDMPGADYQLTKLLGLRPSVKRLMMYQQGCFPGGTVLRLAKDLAENNRGARVLVVCSEITAVTFRGPSDTHLDSLVGQALFGDGAAALIVGADPDTAIERPLFELVSAAQTILPDSDGAIDGHLREVGLTFHLLKDVPGLISKNIEKSLIEAFKPIGINDWNSIFWIAHPGGPAILDQVEHKLAPGRRANSRATRHILSEYGNMSSACVLFILDEMRKKSARRREATTGDGLEWGVLFGFGPGLTVETVVLHSVPAITA</sequence>
<protein>
    <recommendedName>
        <fullName>Chalcone synthase</fullName>
        <ecNumber>2.3.1.74</ecNumber>
    </recommendedName>
    <alternativeName>
        <fullName>Naringenin-chalcone synthase</fullName>
    </alternativeName>
</protein>